<accession>Q87MD8</accession>
<comment type="similarity">
    <text evidence="1">Belongs to the universal ribosomal protein uS2 family.</text>
</comment>
<organism>
    <name type="scientific">Vibrio parahaemolyticus serotype O3:K6 (strain RIMD 2210633)</name>
    <dbReference type="NCBI Taxonomy" id="223926"/>
    <lineage>
        <taxon>Bacteria</taxon>
        <taxon>Pseudomonadati</taxon>
        <taxon>Pseudomonadota</taxon>
        <taxon>Gammaproteobacteria</taxon>
        <taxon>Vibrionales</taxon>
        <taxon>Vibrionaceae</taxon>
        <taxon>Vibrio</taxon>
    </lineage>
</organism>
<protein>
    <recommendedName>
        <fullName evidence="1">Small ribosomal subunit protein uS2</fullName>
    </recommendedName>
    <alternativeName>
        <fullName evidence="2">30S ribosomal protein S2</fullName>
    </alternativeName>
</protein>
<gene>
    <name evidence="1" type="primary">rpsB</name>
    <name type="ordered locus">VP2318</name>
</gene>
<dbReference type="EMBL" id="BA000031">
    <property type="protein sequence ID" value="BAC60581.1"/>
    <property type="molecule type" value="Genomic_DNA"/>
</dbReference>
<dbReference type="RefSeq" id="NP_798697.1">
    <property type="nucleotide sequence ID" value="NC_004603.1"/>
</dbReference>
<dbReference type="RefSeq" id="WP_005456727.1">
    <property type="nucleotide sequence ID" value="NC_004603.1"/>
</dbReference>
<dbReference type="SMR" id="Q87MD8"/>
<dbReference type="GeneID" id="1189831"/>
<dbReference type="KEGG" id="vpa:VP2318"/>
<dbReference type="PATRIC" id="fig|223926.6.peg.2220"/>
<dbReference type="eggNOG" id="COG0052">
    <property type="taxonomic scope" value="Bacteria"/>
</dbReference>
<dbReference type="HOGENOM" id="CLU_040318_1_2_6"/>
<dbReference type="Proteomes" id="UP000002493">
    <property type="component" value="Chromosome 1"/>
</dbReference>
<dbReference type="GO" id="GO:0022627">
    <property type="term" value="C:cytosolic small ribosomal subunit"/>
    <property type="evidence" value="ECO:0007669"/>
    <property type="project" value="TreeGrafter"/>
</dbReference>
<dbReference type="GO" id="GO:0003735">
    <property type="term" value="F:structural constituent of ribosome"/>
    <property type="evidence" value="ECO:0007669"/>
    <property type="project" value="InterPro"/>
</dbReference>
<dbReference type="GO" id="GO:0006412">
    <property type="term" value="P:translation"/>
    <property type="evidence" value="ECO:0007669"/>
    <property type="project" value="UniProtKB-UniRule"/>
</dbReference>
<dbReference type="CDD" id="cd01425">
    <property type="entry name" value="RPS2"/>
    <property type="match status" value="1"/>
</dbReference>
<dbReference type="FunFam" id="1.10.287.610:FF:000001">
    <property type="entry name" value="30S ribosomal protein S2"/>
    <property type="match status" value="1"/>
</dbReference>
<dbReference type="Gene3D" id="3.40.50.10490">
    <property type="entry name" value="Glucose-6-phosphate isomerase like protein, domain 1"/>
    <property type="match status" value="1"/>
</dbReference>
<dbReference type="Gene3D" id="1.10.287.610">
    <property type="entry name" value="Helix hairpin bin"/>
    <property type="match status" value="1"/>
</dbReference>
<dbReference type="HAMAP" id="MF_00291_B">
    <property type="entry name" value="Ribosomal_uS2_B"/>
    <property type="match status" value="1"/>
</dbReference>
<dbReference type="InterPro" id="IPR001865">
    <property type="entry name" value="Ribosomal_uS2"/>
</dbReference>
<dbReference type="InterPro" id="IPR005706">
    <property type="entry name" value="Ribosomal_uS2_bac/mit/plastid"/>
</dbReference>
<dbReference type="InterPro" id="IPR018130">
    <property type="entry name" value="Ribosomal_uS2_CS"/>
</dbReference>
<dbReference type="InterPro" id="IPR023591">
    <property type="entry name" value="Ribosomal_uS2_flav_dom_sf"/>
</dbReference>
<dbReference type="NCBIfam" id="TIGR01011">
    <property type="entry name" value="rpsB_bact"/>
    <property type="match status" value="1"/>
</dbReference>
<dbReference type="PANTHER" id="PTHR12534">
    <property type="entry name" value="30S RIBOSOMAL PROTEIN S2 PROKARYOTIC AND ORGANELLAR"/>
    <property type="match status" value="1"/>
</dbReference>
<dbReference type="PANTHER" id="PTHR12534:SF0">
    <property type="entry name" value="SMALL RIBOSOMAL SUBUNIT PROTEIN US2M"/>
    <property type="match status" value="1"/>
</dbReference>
<dbReference type="Pfam" id="PF00318">
    <property type="entry name" value="Ribosomal_S2"/>
    <property type="match status" value="1"/>
</dbReference>
<dbReference type="PRINTS" id="PR00395">
    <property type="entry name" value="RIBOSOMALS2"/>
</dbReference>
<dbReference type="SUPFAM" id="SSF52313">
    <property type="entry name" value="Ribosomal protein S2"/>
    <property type="match status" value="1"/>
</dbReference>
<dbReference type="PROSITE" id="PS00962">
    <property type="entry name" value="RIBOSOMAL_S2_1"/>
    <property type="match status" value="1"/>
</dbReference>
<dbReference type="PROSITE" id="PS00963">
    <property type="entry name" value="RIBOSOMAL_S2_2"/>
    <property type="match status" value="1"/>
</dbReference>
<evidence type="ECO:0000255" key="1">
    <source>
        <dbReference type="HAMAP-Rule" id="MF_00291"/>
    </source>
</evidence>
<evidence type="ECO:0000305" key="2"/>
<reference key="1">
    <citation type="journal article" date="2003" name="Lancet">
        <title>Genome sequence of Vibrio parahaemolyticus: a pathogenic mechanism distinct from that of V. cholerae.</title>
        <authorList>
            <person name="Makino K."/>
            <person name="Oshima K."/>
            <person name="Kurokawa K."/>
            <person name="Yokoyama K."/>
            <person name="Uda T."/>
            <person name="Tagomori K."/>
            <person name="Iijima Y."/>
            <person name="Najima M."/>
            <person name="Nakano M."/>
            <person name="Yamashita A."/>
            <person name="Kubota Y."/>
            <person name="Kimura S."/>
            <person name="Yasunaga T."/>
            <person name="Honda T."/>
            <person name="Shinagawa H."/>
            <person name="Hattori M."/>
            <person name="Iida T."/>
        </authorList>
    </citation>
    <scope>NUCLEOTIDE SEQUENCE [LARGE SCALE GENOMIC DNA]</scope>
    <source>
        <strain>RIMD 2210633</strain>
    </source>
</reference>
<keyword id="KW-0687">Ribonucleoprotein</keyword>
<keyword id="KW-0689">Ribosomal protein</keyword>
<name>RS2_VIBPA</name>
<feature type="chain" id="PRO_0000134272" description="Small ribosomal subunit protein uS2">
    <location>
        <begin position="1"/>
        <end position="242"/>
    </location>
</feature>
<sequence>MATVSMRDMLKAGVHFGHQTRYWNPKMKPFIFGARNRVHIINLEKTVPMFNEALAELAKVGEKKGKVLFVGTKRAASEAVKEAAIASNQFYVNNRWLGGMLTNYKTVRQSIKRLKELEIQSQDGTFDKLTKKEALMRTREMEKLEKSLGGIKDMGGLPDALFVIDADHEHIAIKEANNLGIPVYAVVDTNSNPDGVDYIIPGNDDAIRAVQLYLNAAASAVTEGRNKDVAVVAEKDGFVEAE</sequence>
<proteinExistence type="inferred from homology"/>